<evidence type="ECO:0000250" key="1">
    <source>
        <dbReference type="UniProtKB" id="P10906"/>
    </source>
</evidence>
<evidence type="ECO:0000255" key="2"/>
<evidence type="ECO:0000255" key="3">
    <source>
        <dbReference type="PROSITE-ProRule" id="PRU00441"/>
    </source>
</evidence>
<evidence type="ECO:0000305" key="4"/>
<dbReference type="EMBL" id="AE009952">
    <property type="protein sequence ID" value="AAM84025.1"/>
    <property type="molecule type" value="Genomic_DNA"/>
</dbReference>
<dbReference type="EMBL" id="AE017042">
    <property type="protein sequence ID" value="AAS63423.1"/>
    <property type="molecule type" value="Genomic_DNA"/>
</dbReference>
<dbReference type="EMBL" id="AL590842">
    <property type="protein sequence ID" value="CAL22380.1"/>
    <property type="molecule type" value="Genomic_DNA"/>
</dbReference>
<dbReference type="PIR" id="AI0461">
    <property type="entry name" value="AI0461"/>
</dbReference>
<dbReference type="RefSeq" id="WP_002211522.1">
    <property type="nucleotide sequence ID" value="NZ_WUCM01000048.1"/>
</dbReference>
<dbReference type="RefSeq" id="YP_002348671.1">
    <property type="nucleotide sequence ID" value="NC_003143.1"/>
</dbReference>
<dbReference type="SMR" id="Q7CKV5"/>
<dbReference type="STRING" id="214092.YPO3794"/>
<dbReference type="PaxDb" id="214092-YPO3794"/>
<dbReference type="DNASU" id="1145383"/>
<dbReference type="EnsemblBacteria" id="AAS63423">
    <property type="protein sequence ID" value="AAS63423"/>
    <property type="gene ID" value="YP_3255"/>
</dbReference>
<dbReference type="GeneID" id="57974914"/>
<dbReference type="KEGG" id="ype:YPO3794"/>
<dbReference type="KEGG" id="ypk:y0436"/>
<dbReference type="KEGG" id="ypm:YP_3255"/>
<dbReference type="PATRIC" id="fig|214092.21.peg.4315"/>
<dbReference type="eggNOG" id="COG0395">
    <property type="taxonomic scope" value="Bacteria"/>
</dbReference>
<dbReference type="HOGENOM" id="CLU_016047_1_1_6"/>
<dbReference type="OMA" id="FIAWNDF"/>
<dbReference type="OrthoDB" id="369039at2"/>
<dbReference type="Proteomes" id="UP000000815">
    <property type="component" value="Chromosome"/>
</dbReference>
<dbReference type="Proteomes" id="UP000001019">
    <property type="component" value="Chromosome"/>
</dbReference>
<dbReference type="Proteomes" id="UP000002490">
    <property type="component" value="Chromosome"/>
</dbReference>
<dbReference type="GO" id="GO:0005886">
    <property type="term" value="C:plasma membrane"/>
    <property type="evidence" value="ECO:0007669"/>
    <property type="project" value="UniProtKB-SubCell"/>
</dbReference>
<dbReference type="GO" id="GO:0055085">
    <property type="term" value="P:transmembrane transport"/>
    <property type="evidence" value="ECO:0007669"/>
    <property type="project" value="InterPro"/>
</dbReference>
<dbReference type="CDD" id="cd06261">
    <property type="entry name" value="TM_PBP2"/>
    <property type="match status" value="1"/>
</dbReference>
<dbReference type="Gene3D" id="1.10.3720.10">
    <property type="entry name" value="MetI-like"/>
    <property type="match status" value="1"/>
</dbReference>
<dbReference type="InterPro" id="IPR000515">
    <property type="entry name" value="MetI-like"/>
</dbReference>
<dbReference type="InterPro" id="IPR035906">
    <property type="entry name" value="MetI-like_sf"/>
</dbReference>
<dbReference type="NCBIfam" id="NF008210">
    <property type="entry name" value="PRK10973.1"/>
    <property type="match status" value="1"/>
</dbReference>
<dbReference type="PANTHER" id="PTHR43744">
    <property type="entry name" value="ABC TRANSPORTER PERMEASE PROTEIN MG189-RELATED-RELATED"/>
    <property type="match status" value="1"/>
</dbReference>
<dbReference type="PANTHER" id="PTHR43744:SF8">
    <property type="entry name" value="SN-GLYCEROL-3-PHOSPHATE TRANSPORT SYSTEM PERMEASE PROTEIN UGPE"/>
    <property type="match status" value="1"/>
</dbReference>
<dbReference type="Pfam" id="PF00528">
    <property type="entry name" value="BPD_transp_1"/>
    <property type="match status" value="1"/>
</dbReference>
<dbReference type="SUPFAM" id="SSF161098">
    <property type="entry name" value="MetI-like"/>
    <property type="match status" value="1"/>
</dbReference>
<dbReference type="PROSITE" id="PS50928">
    <property type="entry name" value="ABC_TM1"/>
    <property type="match status" value="1"/>
</dbReference>
<accession>Q7CKV5</accession>
<accession>Q74R29</accession>
<proteinExistence type="inferred from homology"/>
<sequence length="281" mass="31472">MIENRRGLDIFCHIMLIIGVLLILFPLYVAFVAASLDDSQVFQAPMTLIPGPHLWQNISHIWHAGVGNNSTPFGLMLLNSFVMAFAITVGKITVSILSAYAIVYFRFPLRNLFFWLIFLTLMLPVEVRIFPTIEVIANLNLLDSYTGLTLPLMASATATFLFRQFFMTLPDELLEAARIDGAGAMRFFWDIVLPLSKTNLAALFVITFIYGWNQYLWPILITSDASMGTAVAGIRSMISTSGAPTQWNQVMAAMILTLIPPVVVVLLMQRWFVRGLVDSEK</sequence>
<comment type="function">
    <text evidence="1">Part of the ABC transporter complex UgpBAEC involved in sn-glycerol-3-phosphate (G3P) import. Probably responsible for the translocation of the substrate across the membrane.</text>
</comment>
<comment type="subunit">
    <text evidence="1">The complex is composed of two ATP-binding proteins (UgpC), two transmembrane proteins (UgpA and UgpE) and a solute-binding protein (UgpB).</text>
</comment>
<comment type="subcellular location">
    <subcellularLocation>
        <location evidence="1">Cell inner membrane</location>
        <topology evidence="2">Multi-pass membrane protein</topology>
    </subcellularLocation>
</comment>
<comment type="similarity">
    <text evidence="4">Belongs to the binding-protein-dependent transport system permease family. UgpAE subfamily.</text>
</comment>
<organism>
    <name type="scientific">Yersinia pestis</name>
    <dbReference type="NCBI Taxonomy" id="632"/>
    <lineage>
        <taxon>Bacteria</taxon>
        <taxon>Pseudomonadati</taxon>
        <taxon>Pseudomonadota</taxon>
        <taxon>Gammaproteobacteria</taxon>
        <taxon>Enterobacterales</taxon>
        <taxon>Yersiniaceae</taxon>
        <taxon>Yersinia</taxon>
    </lineage>
</organism>
<protein>
    <recommendedName>
        <fullName evidence="1">sn-glycerol-3-phosphate transport system permease protein UgpE</fullName>
    </recommendedName>
</protein>
<name>UGPE_YERPE</name>
<keyword id="KW-0997">Cell inner membrane</keyword>
<keyword id="KW-1003">Cell membrane</keyword>
<keyword id="KW-0472">Membrane</keyword>
<keyword id="KW-1185">Reference proteome</keyword>
<keyword id="KW-0812">Transmembrane</keyword>
<keyword id="KW-1133">Transmembrane helix</keyword>
<keyword id="KW-0813">Transport</keyword>
<gene>
    <name type="primary">ugpE</name>
    <name type="ordered locus">YPO3794</name>
    <name type="ordered locus">y0436</name>
    <name type="ordered locus">YP_3255</name>
</gene>
<feature type="chain" id="PRO_0000292690" description="sn-glycerol-3-phosphate transport system permease protein UgpE">
    <location>
        <begin position="1"/>
        <end position="281"/>
    </location>
</feature>
<feature type="transmembrane region" description="Helical" evidence="3">
    <location>
        <begin position="14"/>
        <end position="34"/>
    </location>
</feature>
<feature type="transmembrane region" description="Helical" evidence="3">
    <location>
        <begin position="85"/>
        <end position="105"/>
    </location>
</feature>
<feature type="transmembrane region" description="Helical" evidence="3">
    <location>
        <begin position="113"/>
        <end position="133"/>
    </location>
</feature>
<feature type="transmembrane region" description="Helical" evidence="3">
    <location>
        <begin position="142"/>
        <end position="162"/>
    </location>
</feature>
<feature type="transmembrane region" description="Helical" evidence="3">
    <location>
        <begin position="201"/>
        <end position="221"/>
    </location>
</feature>
<feature type="transmembrane region" description="Helical" evidence="3">
    <location>
        <begin position="247"/>
        <end position="267"/>
    </location>
</feature>
<feature type="domain" description="ABC transmembrane type-1" evidence="3">
    <location>
        <begin position="77"/>
        <end position="268"/>
    </location>
</feature>
<reference key="1">
    <citation type="journal article" date="2002" name="J. Bacteriol.">
        <title>Genome sequence of Yersinia pestis KIM.</title>
        <authorList>
            <person name="Deng W."/>
            <person name="Burland V."/>
            <person name="Plunkett G. III"/>
            <person name="Boutin A."/>
            <person name="Mayhew G.F."/>
            <person name="Liss P."/>
            <person name="Perna N.T."/>
            <person name="Rose D.J."/>
            <person name="Mau B."/>
            <person name="Zhou S."/>
            <person name="Schwartz D.C."/>
            <person name="Fetherston J.D."/>
            <person name="Lindler L.E."/>
            <person name="Brubaker R.R."/>
            <person name="Plano G.V."/>
            <person name="Straley S.C."/>
            <person name="McDonough K.A."/>
            <person name="Nilles M.L."/>
            <person name="Matson J.S."/>
            <person name="Blattner F.R."/>
            <person name="Perry R.D."/>
        </authorList>
    </citation>
    <scope>NUCLEOTIDE SEQUENCE [LARGE SCALE GENOMIC DNA]</scope>
    <source>
        <strain>KIM10+ / Biovar Mediaevalis</strain>
    </source>
</reference>
<reference key="2">
    <citation type="journal article" date="2001" name="Nature">
        <title>Genome sequence of Yersinia pestis, the causative agent of plague.</title>
        <authorList>
            <person name="Parkhill J."/>
            <person name="Wren B.W."/>
            <person name="Thomson N.R."/>
            <person name="Titball R.W."/>
            <person name="Holden M.T.G."/>
            <person name="Prentice M.B."/>
            <person name="Sebaihia M."/>
            <person name="James K.D."/>
            <person name="Churcher C.M."/>
            <person name="Mungall K.L."/>
            <person name="Baker S."/>
            <person name="Basham D."/>
            <person name="Bentley S.D."/>
            <person name="Brooks K."/>
            <person name="Cerdeno-Tarraga A.-M."/>
            <person name="Chillingworth T."/>
            <person name="Cronin A."/>
            <person name="Davies R.M."/>
            <person name="Davis P."/>
            <person name="Dougan G."/>
            <person name="Feltwell T."/>
            <person name="Hamlin N."/>
            <person name="Holroyd S."/>
            <person name="Jagels K."/>
            <person name="Karlyshev A.V."/>
            <person name="Leather S."/>
            <person name="Moule S."/>
            <person name="Oyston P.C.F."/>
            <person name="Quail M.A."/>
            <person name="Rutherford K.M."/>
            <person name="Simmonds M."/>
            <person name="Skelton J."/>
            <person name="Stevens K."/>
            <person name="Whitehead S."/>
            <person name="Barrell B.G."/>
        </authorList>
    </citation>
    <scope>NUCLEOTIDE SEQUENCE [LARGE SCALE GENOMIC DNA]</scope>
    <source>
        <strain>CO-92 / Biovar Orientalis</strain>
    </source>
</reference>
<reference key="3">
    <citation type="journal article" date="2004" name="DNA Res.">
        <title>Complete genome sequence of Yersinia pestis strain 91001, an isolate avirulent to humans.</title>
        <authorList>
            <person name="Song Y."/>
            <person name="Tong Z."/>
            <person name="Wang J."/>
            <person name="Wang L."/>
            <person name="Guo Z."/>
            <person name="Han Y."/>
            <person name="Zhang J."/>
            <person name="Pei D."/>
            <person name="Zhou D."/>
            <person name="Qin H."/>
            <person name="Pang X."/>
            <person name="Han Y."/>
            <person name="Zhai J."/>
            <person name="Li M."/>
            <person name="Cui B."/>
            <person name="Qi Z."/>
            <person name="Jin L."/>
            <person name="Dai R."/>
            <person name="Chen F."/>
            <person name="Li S."/>
            <person name="Ye C."/>
            <person name="Du Z."/>
            <person name="Lin W."/>
            <person name="Wang J."/>
            <person name="Yu J."/>
            <person name="Yang H."/>
            <person name="Wang J."/>
            <person name="Huang P."/>
            <person name="Yang R."/>
        </authorList>
    </citation>
    <scope>NUCLEOTIDE SEQUENCE [LARGE SCALE GENOMIC DNA]</scope>
    <source>
        <strain>91001 / Biovar Mediaevalis</strain>
    </source>
</reference>